<keyword id="KW-0227">DNA damage</keyword>
<keyword id="KW-0233">DNA recombination</keyword>
<keyword id="KW-0234">DNA repair</keyword>
<keyword id="KW-1185">Reference proteome</keyword>
<proteinExistence type="inferred from homology"/>
<name>RECO_LIGS1</name>
<comment type="function">
    <text evidence="1">Involved in DNA repair and RecF pathway recombination.</text>
</comment>
<comment type="similarity">
    <text evidence="1">Belongs to the RecO family.</text>
</comment>
<accession>Q1WTP7</accession>
<protein>
    <recommendedName>
        <fullName evidence="1">DNA repair protein RecO</fullName>
    </recommendedName>
    <alternativeName>
        <fullName evidence="1">Recombination protein O</fullName>
    </alternativeName>
</protein>
<dbReference type="EMBL" id="CP000233">
    <property type="protein sequence ID" value="ABD99704.1"/>
    <property type="molecule type" value="Genomic_DNA"/>
</dbReference>
<dbReference type="RefSeq" id="WP_011476023.1">
    <property type="nucleotide sequence ID" value="NC_007929.1"/>
</dbReference>
<dbReference type="RefSeq" id="YP_535787.1">
    <property type="nucleotide sequence ID" value="NC_007929.1"/>
</dbReference>
<dbReference type="SMR" id="Q1WTP7"/>
<dbReference type="STRING" id="362948.LSL_0894"/>
<dbReference type="KEGG" id="lsl:LSL_0894"/>
<dbReference type="PATRIC" id="fig|362948.14.peg.969"/>
<dbReference type="HOGENOM" id="CLU_066632_4_0_9"/>
<dbReference type="OrthoDB" id="9797083at2"/>
<dbReference type="Proteomes" id="UP000006559">
    <property type="component" value="Chromosome"/>
</dbReference>
<dbReference type="GO" id="GO:0043590">
    <property type="term" value="C:bacterial nucleoid"/>
    <property type="evidence" value="ECO:0007669"/>
    <property type="project" value="TreeGrafter"/>
</dbReference>
<dbReference type="GO" id="GO:0006310">
    <property type="term" value="P:DNA recombination"/>
    <property type="evidence" value="ECO:0007669"/>
    <property type="project" value="UniProtKB-UniRule"/>
</dbReference>
<dbReference type="GO" id="GO:0006302">
    <property type="term" value="P:double-strand break repair"/>
    <property type="evidence" value="ECO:0007669"/>
    <property type="project" value="TreeGrafter"/>
</dbReference>
<dbReference type="Gene3D" id="2.40.50.140">
    <property type="entry name" value="Nucleic acid-binding proteins"/>
    <property type="match status" value="1"/>
</dbReference>
<dbReference type="Gene3D" id="1.20.1440.120">
    <property type="entry name" value="Recombination protein O, C-terminal domain"/>
    <property type="match status" value="1"/>
</dbReference>
<dbReference type="HAMAP" id="MF_00201">
    <property type="entry name" value="RecO"/>
    <property type="match status" value="1"/>
</dbReference>
<dbReference type="InterPro" id="IPR037278">
    <property type="entry name" value="ARFGAP/RecO"/>
</dbReference>
<dbReference type="InterPro" id="IPR022572">
    <property type="entry name" value="DNA_rep/recomb_RecO_N"/>
</dbReference>
<dbReference type="InterPro" id="IPR012340">
    <property type="entry name" value="NA-bd_OB-fold"/>
</dbReference>
<dbReference type="InterPro" id="IPR003717">
    <property type="entry name" value="RecO"/>
</dbReference>
<dbReference type="InterPro" id="IPR042242">
    <property type="entry name" value="RecO_C"/>
</dbReference>
<dbReference type="NCBIfam" id="TIGR00613">
    <property type="entry name" value="reco"/>
    <property type="match status" value="1"/>
</dbReference>
<dbReference type="PANTHER" id="PTHR33991">
    <property type="entry name" value="DNA REPAIR PROTEIN RECO"/>
    <property type="match status" value="1"/>
</dbReference>
<dbReference type="PANTHER" id="PTHR33991:SF1">
    <property type="entry name" value="DNA REPAIR PROTEIN RECO"/>
    <property type="match status" value="1"/>
</dbReference>
<dbReference type="Pfam" id="PF02565">
    <property type="entry name" value="RecO_C"/>
    <property type="match status" value="1"/>
</dbReference>
<dbReference type="Pfam" id="PF11967">
    <property type="entry name" value="RecO_N"/>
    <property type="match status" value="1"/>
</dbReference>
<dbReference type="SUPFAM" id="SSF57863">
    <property type="entry name" value="ArfGap/RecO-like zinc finger"/>
    <property type="match status" value="1"/>
</dbReference>
<dbReference type="SUPFAM" id="SSF50249">
    <property type="entry name" value="Nucleic acid-binding proteins"/>
    <property type="match status" value="1"/>
</dbReference>
<organism>
    <name type="scientific">Ligilactobacillus salivarius (strain UCC118)</name>
    <name type="common">Lactobacillus salivarius</name>
    <dbReference type="NCBI Taxonomy" id="362948"/>
    <lineage>
        <taxon>Bacteria</taxon>
        <taxon>Bacillati</taxon>
        <taxon>Bacillota</taxon>
        <taxon>Bacilli</taxon>
        <taxon>Lactobacillales</taxon>
        <taxon>Lactobacillaceae</taxon>
        <taxon>Ligilactobacillus</taxon>
    </lineage>
</organism>
<gene>
    <name evidence="1" type="primary">recO</name>
    <name type="ordered locus">LSL_0894</name>
</gene>
<evidence type="ECO:0000255" key="1">
    <source>
        <dbReference type="HAMAP-Rule" id="MF_00201"/>
    </source>
</evidence>
<reference key="1">
    <citation type="journal article" date="2006" name="Proc. Natl. Acad. Sci. U.S.A.">
        <title>Multireplicon genome architecture of Lactobacillus salivarius.</title>
        <authorList>
            <person name="Claesson M.J."/>
            <person name="Li Y."/>
            <person name="Leahy S."/>
            <person name="Canchaya C."/>
            <person name="van Pijkeren J.P."/>
            <person name="Cerdeno-Tarraga A.M."/>
            <person name="Parkhill J."/>
            <person name="Flynn S."/>
            <person name="O'Sullivan G.C."/>
            <person name="Collins J.K."/>
            <person name="Higgins D."/>
            <person name="Shanahan F."/>
            <person name="Fitzgerald G.F."/>
            <person name="van Sinderen D."/>
            <person name="O'Toole P.W."/>
        </authorList>
    </citation>
    <scope>NUCLEOTIDE SEQUENCE [LARGE SCALE GENOMIC DNA]</scope>
    <source>
        <strain>UCC118</strain>
    </source>
</reference>
<feature type="chain" id="PRO_0000264821" description="DNA repair protein RecO">
    <location>
        <begin position="1"/>
        <end position="260"/>
    </location>
</feature>
<sequence length="260" mass="30091">MIYKNVEFSAIVTKRKNYRERDMLVTMFTDKYGFKTFFVRGVRKRGFKLGAAILPFTHGTYIGSINSEGLSFITATKGIDQFQSINQDIILNAYATYILELVKAAFEDSIDVTNTLWFEKVLKALSLINDGFDAQIIANIIEVQLLGKFGVQPNWRSCVICGETQSQFDYSESYGGILCRKHWYMDKNRLNLDQRTMYYLRKFSIVDLNYLNSIKVNADTKKKLKLTLNEIYDNQVGIYVKARSFIDKMTKVENNLLKKD</sequence>